<protein>
    <recommendedName>
        <fullName evidence="1">Chorismate synthase</fullName>
        <shortName evidence="1">CS</shortName>
        <ecNumber evidence="1">4.2.3.5</ecNumber>
    </recommendedName>
    <alternativeName>
        <fullName evidence="1">5-enolpyruvylshikimate-3-phosphate phospholyase</fullName>
    </alternativeName>
</protein>
<organism>
    <name type="scientific">Escherichia coli O45:K1 (strain S88 / ExPEC)</name>
    <dbReference type="NCBI Taxonomy" id="585035"/>
    <lineage>
        <taxon>Bacteria</taxon>
        <taxon>Pseudomonadati</taxon>
        <taxon>Pseudomonadota</taxon>
        <taxon>Gammaproteobacteria</taxon>
        <taxon>Enterobacterales</taxon>
        <taxon>Enterobacteriaceae</taxon>
        <taxon>Escherichia</taxon>
    </lineage>
</organism>
<name>AROC_ECO45</name>
<feature type="chain" id="PRO_1000119489" description="Chorismate synthase">
    <location>
        <begin position="1"/>
        <end position="361"/>
    </location>
</feature>
<feature type="binding site" evidence="1">
    <location>
        <position position="48"/>
    </location>
    <ligand>
        <name>NADP(+)</name>
        <dbReference type="ChEBI" id="CHEBI:58349"/>
    </ligand>
</feature>
<feature type="binding site" evidence="1">
    <location>
        <position position="54"/>
    </location>
    <ligand>
        <name>NADP(+)</name>
        <dbReference type="ChEBI" id="CHEBI:58349"/>
    </ligand>
</feature>
<feature type="binding site" evidence="1">
    <location>
        <begin position="125"/>
        <end position="127"/>
    </location>
    <ligand>
        <name>FMN</name>
        <dbReference type="ChEBI" id="CHEBI:58210"/>
    </ligand>
</feature>
<feature type="binding site" evidence="1">
    <location>
        <begin position="238"/>
        <end position="239"/>
    </location>
    <ligand>
        <name>FMN</name>
        <dbReference type="ChEBI" id="CHEBI:58210"/>
    </ligand>
</feature>
<feature type="binding site" evidence="1">
    <location>
        <position position="278"/>
    </location>
    <ligand>
        <name>FMN</name>
        <dbReference type="ChEBI" id="CHEBI:58210"/>
    </ligand>
</feature>
<feature type="binding site" evidence="1">
    <location>
        <begin position="293"/>
        <end position="297"/>
    </location>
    <ligand>
        <name>FMN</name>
        <dbReference type="ChEBI" id="CHEBI:58210"/>
    </ligand>
</feature>
<feature type="binding site" evidence="1">
    <location>
        <position position="319"/>
    </location>
    <ligand>
        <name>FMN</name>
        <dbReference type="ChEBI" id="CHEBI:58210"/>
    </ligand>
</feature>
<evidence type="ECO:0000255" key="1">
    <source>
        <dbReference type="HAMAP-Rule" id="MF_00300"/>
    </source>
</evidence>
<gene>
    <name evidence="1" type="primary">aroC</name>
    <name type="ordered locus">ECS88_2477</name>
</gene>
<keyword id="KW-0028">Amino-acid biosynthesis</keyword>
<keyword id="KW-0057">Aromatic amino acid biosynthesis</keyword>
<keyword id="KW-0274">FAD</keyword>
<keyword id="KW-0285">Flavoprotein</keyword>
<keyword id="KW-0288">FMN</keyword>
<keyword id="KW-0456">Lyase</keyword>
<keyword id="KW-0521">NADP</keyword>
<keyword id="KW-1185">Reference proteome</keyword>
<accession>B7MG93</accession>
<proteinExistence type="inferred from homology"/>
<comment type="function">
    <text evidence="1">Catalyzes the anti-1,4-elimination of the C-3 phosphate and the C-6 proR hydrogen from 5-enolpyruvylshikimate-3-phosphate (EPSP) to yield chorismate, which is the branch point compound that serves as the starting substrate for the three terminal pathways of aromatic amino acid biosynthesis. This reaction introduces a second double bond into the aromatic ring system.</text>
</comment>
<comment type="catalytic activity">
    <reaction evidence="1">
        <text>5-O-(1-carboxyvinyl)-3-phosphoshikimate = chorismate + phosphate</text>
        <dbReference type="Rhea" id="RHEA:21020"/>
        <dbReference type="ChEBI" id="CHEBI:29748"/>
        <dbReference type="ChEBI" id="CHEBI:43474"/>
        <dbReference type="ChEBI" id="CHEBI:57701"/>
        <dbReference type="EC" id="4.2.3.5"/>
    </reaction>
</comment>
<comment type="cofactor">
    <cofactor evidence="1">
        <name>FMNH2</name>
        <dbReference type="ChEBI" id="CHEBI:57618"/>
    </cofactor>
    <text evidence="1">Reduced FMN (FMNH(2)).</text>
</comment>
<comment type="pathway">
    <text evidence="1">Metabolic intermediate biosynthesis; chorismate biosynthesis; chorismate from D-erythrose 4-phosphate and phosphoenolpyruvate: step 7/7.</text>
</comment>
<comment type="subunit">
    <text evidence="1">Homotetramer.</text>
</comment>
<comment type="similarity">
    <text evidence="1">Belongs to the chorismate synthase family.</text>
</comment>
<reference key="1">
    <citation type="journal article" date="2009" name="PLoS Genet.">
        <title>Organised genome dynamics in the Escherichia coli species results in highly diverse adaptive paths.</title>
        <authorList>
            <person name="Touchon M."/>
            <person name="Hoede C."/>
            <person name="Tenaillon O."/>
            <person name="Barbe V."/>
            <person name="Baeriswyl S."/>
            <person name="Bidet P."/>
            <person name="Bingen E."/>
            <person name="Bonacorsi S."/>
            <person name="Bouchier C."/>
            <person name="Bouvet O."/>
            <person name="Calteau A."/>
            <person name="Chiapello H."/>
            <person name="Clermont O."/>
            <person name="Cruveiller S."/>
            <person name="Danchin A."/>
            <person name="Diard M."/>
            <person name="Dossat C."/>
            <person name="Karoui M.E."/>
            <person name="Frapy E."/>
            <person name="Garry L."/>
            <person name="Ghigo J.M."/>
            <person name="Gilles A.M."/>
            <person name="Johnson J."/>
            <person name="Le Bouguenec C."/>
            <person name="Lescat M."/>
            <person name="Mangenot S."/>
            <person name="Martinez-Jehanne V."/>
            <person name="Matic I."/>
            <person name="Nassif X."/>
            <person name="Oztas S."/>
            <person name="Petit M.A."/>
            <person name="Pichon C."/>
            <person name="Rouy Z."/>
            <person name="Ruf C.S."/>
            <person name="Schneider D."/>
            <person name="Tourret J."/>
            <person name="Vacherie B."/>
            <person name="Vallenet D."/>
            <person name="Medigue C."/>
            <person name="Rocha E.P.C."/>
            <person name="Denamur E."/>
        </authorList>
    </citation>
    <scope>NUCLEOTIDE SEQUENCE [LARGE SCALE GENOMIC DNA]</scope>
    <source>
        <strain>S88 / ExPEC</strain>
    </source>
</reference>
<sequence>MAGNTIGQLFRVTTFGESHGLALGCIVDGVPPGIPLTEADLQHDLDRRRPGTSRYTTQRREPDQVKILSGVFEGVTTGTSIGLLIENTDQRSQDYSAIKDVFRPGHADYTYEQKYGLRDYRGGGRSSARETAMRVAAGAIAKKYLAEKFGIEIRGCLTQMGDIPLEIKDWSQVEQNPFFCPDPDKIDALDELMRALKKEGDSIGAKVTVVASGVPAGLGEPVFDRLDADIAHALMSINAVKGVEIGDGFDVVALRGSQNRDEITKDGFQSNHAGGILGGISSGQKIIAHMALKPTSSITVPGRTINRFGEEVEMITKGRHDPCVGIRAVPIAEAMLAIVLMDHLLRQRAQNADVKTDIPRW</sequence>
<dbReference type="EC" id="4.2.3.5" evidence="1"/>
<dbReference type="EMBL" id="CU928161">
    <property type="protein sequence ID" value="CAR03755.1"/>
    <property type="molecule type" value="Genomic_DNA"/>
</dbReference>
<dbReference type="RefSeq" id="WP_001331783.1">
    <property type="nucleotide sequence ID" value="NC_011742.1"/>
</dbReference>
<dbReference type="SMR" id="B7MG93"/>
<dbReference type="KEGG" id="ecz:ECS88_2477"/>
<dbReference type="HOGENOM" id="CLU_034547_0_2_6"/>
<dbReference type="UniPathway" id="UPA00053">
    <property type="reaction ID" value="UER00090"/>
</dbReference>
<dbReference type="Proteomes" id="UP000000747">
    <property type="component" value="Chromosome"/>
</dbReference>
<dbReference type="GO" id="GO:0005829">
    <property type="term" value="C:cytosol"/>
    <property type="evidence" value="ECO:0007669"/>
    <property type="project" value="TreeGrafter"/>
</dbReference>
<dbReference type="GO" id="GO:0004107">
    <property type="term" value="F:chorismate synthase activity"/>
    <property type="evidence" value="ECO:0007669"/>
    <property type="project" value="UniProtKB-UniRule"/>
</dbReference>
<dbReference type="GO" id="GO:0010181">
    <property type="term" value="F:FMN binding"/>
    <property type="evidence" value="ECO:0007669"/>
    <property type="project" value="TreeGrafter"/>
</dbReference>
<dbReference type="GO" id="GO:0008652">
    <property type="term" value="P:amino acid biosynthetic process"/>
    <property type="evidence" value="ECO:0007669"/>
    <property type="project" value="UniProtKB-KW"/>
</dbReference>
<dbReference type="GO" id="GO:0009073">
    <property type="term" value="P:aromatic amino acid family biosynthetic process"/>
    <property type="evidence" value="ECO:0007669"/>
    <property type="project" value="UniProtKB-KW"/>
</dbReference>
<dbReference type="GO" id="GO:0009423">
    <property type="term" value="P:chorismate biosynthetic process"/>
    <property type="evidence" value="ECO:0007669"/>
    <property type="project" value="UniProtKB-UniRule"/>
</dbReference>
<dbReference type="CDD" id="cd07304">
    <property type="entry name" value="Chorismate_synthase"/>
    <property type="match status" value="1"/>
</dbReference>
<dbReference type="FunFam" id="3.60.150.10:FF:000001">
    <property type="entry name" value="Chorismate synthase"/>
    <property type="match status" value="1"/>
</dbReference>
<dbReference type="Gene3D" id="3.60.150.10">
    <property type="entry name" value="Chorismate synthase AroC"/>
    <property type="match status" value="1"/>
</dbReference>
<dbReference type="HAMAP" id="MF_00300">
    <property type="entry name" value="Chorismate_synth"/>
    <property type="match status" value="1"/>
</dbReference>
<dbReference type="InterPro" id="IPR000453">
    <property type="entry name" value="Chorismate_synth"/>
</dbReference>
<dbReference type="InterPro" id="IPR035904">
    <property type="entry name" value="Chorismate_synth_AroC_sf"/>
</dbReference>
<dbReference type="InterPro" id="IPR020541">
    <property type="entry name" value="Chorismate_synthase_CS"/>
</dbReference>
<dbReference type="NCBIfam" id="TIGR00033">
    <property type="entry name" value="aroC"/>
    <property type="match status" value="1"/>
</dbReference>
<dbReference type="NCBIfam" id="NF003793">
    <property type="entry name" value="PRK05382.1"/>
    <property type="match status" value="1"/>
</dbReference>
<dbReference type="PANTHER" id="PTHR21085">
    <property type="entry name" value="CHORISMATE SYNTHASE"/>
    <property type="match status" value="1"/>
</dbReference>
<dbReference type="PANTHER" id="PTHR21085:SF0">
    <property type="entry name" value="CHORISMATE SYNTHASE"/>
    <property type="match status" value="1"/>
</dbReference>
<dbReference type="Pfam" id="PF01264">
    <property type="entry name" value="Chorismate_synt"/>
    <property type="match status" value="1"/>
</dbReference>
<dbReference type="PIRSF" id="PIRSF001456">
    <property type="entry name" value="Chorismate_synth"/>
    <property type="match status" value="1"/>
</dbReference>
<dbReference type="SUPFAM" id="SSF103263">
    <property type="entry name" value="Chorismate synthase, AroC"/>
    <property type="match status" value="1"/>
</dbReference>
<dbReference type="PROSITE" id="PS00787">
    <property type="entry name" value="CHORISMATE_SYNTHASE_1"/>
    <property type="match status" value="1"/>
</dbReference>
<dbReference type="PROSITE" id="PS00788">
    <property type="entry name" value="CHORISMATE_SYNTHASE_2"/>
    <property type="match status" value="1"/>
</dbReference>
<dbReference type="PROSITE" id="PS00789">
    <property type="entry name" value="CHORISMATE_SYNTHASE_3"/>
    <property type="match status" value="1"/>
</dbReference>